<name>ACP_DEIRA</name>
<organism>
    <name type="scientific">Deinococcus radiodurans (strain ATCC 13939 / DSM 20539 / JCM 16871 / CCUG 27074 / LMG 4051 / NBRC 15346 / NCIMB 9279 / VKM B-1422 / R1)</name>
    <dbReference type="NCBI Taxonomy" id="243230"/>
    <lineage>
        <taxon>Bacteria</taxon>
        <taxon>Thermotogati</taxon>
        <taxon>Deinococcota</taxon>
        <taxon>Deinococci</taxon>
        <taxon>Deinococcales</taxon>
        <taxon>Deinococcaceae</taxon>
        <taxon>Deinococcus</taxon>
    </lineage>
</organism>
<feature type="chain" id="PRO_0000180133" description="Acyl carrier protein">
    <location>
        <begin position="1"/>
        <end position="76"/>
    </location>
</feature>
<feature type="domain" description="Carrier" evidence="2">
    <location>
        <begin position="1"/>
        <end position="76"/>
    </location>
</feature>
<feature type="modified residue" description="O-(pantetheine 4'-phosphoryl)serine" evidence="2">
    <location>
        <position position="36"/>
    </location>
</feature>
<protein>
    <recommendedName>
        <fullName evidence="1">Acyl carrier protein</fullName>
        <shortName evidence="1">ACP</shortName>
    </recommendedName>
</protein>
<keyword id="KW-0963">Cytoplasm</keyword>
<keyword id="KW-0275">Fatty acid biosynthesis</keyword>
<keyword id="KW-0276">Fatty acid metabolism</keyword>
<keyword id="KW-0444">Lipid biosynthesis</keyword>
<keyword id="KW-0443">Lipid metabolism</keyword>
<keyword id="KW-0596">Phosphopantetheine</keyword>
<keyword id="KW-0597">Phosphoprotein</keyword>
<keyword id="KW-1185">Reference proteome</keyword>
<sequence length="76" mass="8287">MATFDDVKDVIVDKLGVDEGKVTPEARFVEDLGADSLETVELIMGLEDKFGVTIPDEAAETIRTVQAAVDYIDNNQ</sequence>
<proteinExistence type="inferred from homology"/>
<gene>
    <name evidence="1" type="primary">acpP</name>
    <name type="ordered locus">DR_1942</name>
</gene>
<dbReference type="EMBL" id="AE000513">
    <property type="protein sequence ID" value="AAF11495.1"/>
    <property type="status" value="ALT_INIT"/>
    <property type="molecule type" value="Genomic_DNA"/>
</dbReference>
<dbReference type="PIR" id="F75333">
    <property type="entry name" value="F75333"/>
</dbReference>
<dbReference type="RefSeq" id="NP_295665.1">
    <property type="nucleotide sequence ID" value="NC_001263.1"/>
</dbReference>
<dbReference type="RefSeq" id="WP_027479819.1">
    <property type="nucleotide sequence ID" value="NC_001263.1"/>
</dbReference>
<dbReference type="SMR" id="Q9RT27"/>
<dbReference type="FunCoup" id="Q9RT27">
    <property type="interactions" value="318"/>
</dbReference>
<dbReference type="STRING" id="243230.DR_1942"/>
<dbReference type="PaxDb" id="243230-DR_1942"/>
<dbReference type="EnsemblBacteria" id="AAF11495">
    <property type="protein sequence ID" value="AAF11495"/>
    <property type="gene ID" value="DR_1942"/>
</dbReference>
<dbReference type="GeneID" id="69518178"/>
<dbReference type="KEGG" id="dra:DR_1942"/>
<dbReference type="PATRIC" id="fig|243230.17.peg.2162"/>
<dbReference type="eggNOG" id="COG0236">
    <property type="taxonomic scope" value="Bacteria"/>
</dbReference>
<dbReference type="HOGENOM" id="CLU_108696_1_3_0"/>
<dbReference type="InParanoid" id="Q9RT27"/>
<dbReference type="OrthoDB" id="9804551at2"/>
<dbReference type="UniPathway" id="UPA00094"/>
<dbReference type="Proteomes" id="UP000002524">
    <property type="component" value="Chromosome 1"/>
</dbReference>
<dbReference type="GO" id="GO:0005829">
    <property type="term" value="C:cytosol"/>
    <property type="evidence" value="ECO:0000318"/>
    <property type="project" value="GO_Central"/>
</dbReference>
<dbReference type="GO" id="GO:0016020">
    <property type="term" value="C:membrane"/>
    <property type="evidence" value="ECO:0007669"/>
    <property type="project" value="GOC"/>
</dbReference>
<dbReference type="GO" id="GO:0000035">
    <property type="term" value="F:acyl binding"/>
    <property type="evidence" value="ECO:0000318"/>
    <property type="project" value="GO_Central"/>
</dbReference>
<dbReference type="GO" id="GO:0000036">
    <property type="term" value="F:acyl carrier activity"/>
    <property type="evidence" value="ECO:0000318"/>
    <property type="project" value="GO_Central"/>
</dbReference>
<dbReference type="GO" id="GO:0009245">
    <property type="term" value="P:lipid A biosynthetic process"/>
    <property type="evidence" value="ECO:0000318"/>
    <property type="project" value="GO_Central"/>
</dbReference>
<dbReference type="FunFam" id="1.10.1200.10:FF:000006">
    <property type="entry name" value="Acyl carrier protein"/>
    <property type="match status" value="1"/>
</dbReference>
<dbReference type="Gene3D" id="1.10.1200.10">
    <property type="entry name" value="ACP-like"/>
    <property type="match status" value="1"/>
</dbReference>
<dbReference type="HAMAP" id="MF_01217">
    <property type="entry name" value="Acyl_carrier"/>
    <property type="match status" value="1"/>
</dbReference>
<dbReference type="InterPro" id="IPR003231">
    <property type="entry name" value="ACP"/>
</dbReference>
<dbReference type="InterPro" id="IPR036736">
    <property type="entry name" value="ACP-like_sf"/>
</dbReference>
<dbReference type="InterPro" id="IPR009081">
    <property type="entry name" value="PP-bd_ACP"/>
</dbReference>
<dbReference type="InterPro" id="IPR006162">
    <property type="entry name" value="Ppantetheine_attach_site"/>
</dbReference>
<dbReference type="NCBIfam" id="TIGR00517">
    <property type="entry name" value="acyl_carrier"/>
    <property type="match status" value="1"/>
</dbReference>
<dbReference type="NCBIfam" id="NF002148">
    <property type="entry name" value="PRK00982.1-2"/>
    <property type="match status" value="1"/>
</dbReference>
<dbReference type="NCBIfam" id="NF002150">
    <property type="entry name" value="PRK00982.1-4"/>
    <property type="match status" value="1"/>
</dbReference>
<dbReference type="NCBIfam" id="NF002151">
    <property type="entry name" value="PRK00982.1-5"/>
    <property type="match status" value="1"/>
</dbReference>
<dbReference type="PANTHER" id="PTHR20863">
    <property type="entry name" value="ACYL CARRIER PROTEIN"/>
    <property type="match status" value="1"/>
</dbReference>
<dbReference type="PANTHER" id="PTHR20863:SF76">
    <property type="entry name" value="CARRIER DOMAIN-CONTAINING PROTEIN"/>
    <property type="match status" value="1"/>
</dbReference>
<dbReference type="Pfam" id="PF00550">
    <property type="entry name" value="PP-binding"/>
    <property type="match status" value="1"/>
</dbReference>
<dbReference type="SUPFAM" id="SSF47336">
    <property type="entry name" value="ACP-like"/>
    <property type="match status" value="1"/>
</dbReference>
<dbReference type="PROSITE" id="PS50075">
    <property type="entry name" value="CARRIER"/>
    <property type="match status" value="1"/>
</dbReference>
<dbReference type="PROSITE" id="PS00012">
    <property type="entry name" value="PHOSPHOPANTETHEINE"/>
    <property type="match status" value="1"/>
</dbReference>
<comment type="function">
    <text evidence="1">Carrier of the growing fatty acid chain in fatty acid biosynthesis.</text>
</comment>
<comment type="pathway">
    <text evidence="1">Lipid metabolism; fatty acid biosynthesis.</text>
</comment>
<comment type="subcellular location">
    <subcellularLocation>
        <location evidence="1">Cytoplasm</location>
    </subcellularLocation>
</comment>
<comment type="PTM">
    <text evidence="1">4'-phosphopantetheine is transferred from CoA to a specific serine of apo-ACP by AcpS. This modification is essential for activity because fatty acids are bound in thioester linkage to the sulfhydryl of the prosthetic group.</text>
</comment>
<comment type="similarity">
    <text evidence="1">Belongs to the acyl carrier protein (ACP) family.</text>
</comment>
<comment type="sequence caution" evidence="3">
    <conflict type="erroneous initiation">
        <sequence resource="EMBL-CDS" id="AAF11495"/>
    </conflict>
</comment>
<evidence type="ECO:0000255" key="1">
    <source>
        <dbReference type="HAMAP-Rule" id="MF_01217"/>
    </source>
</evidence>
<evidence type="ECO:0000255" key="2">
    <source>
        <dbReference type="PROSITE-ProRule" id="PRU00258"/>
    </source>
</evidence>
<evidence type="ECO:0000305" key="3"/>
<reference key="1">
    <citation type="journal article" date="1999" name="Science">
        <title>Genome sequence of the radioresistant bacterium Deinococcus radiodurans R1.</title>
        <authorList>
            <person name="White O."/>
            <person name="Eisen J.A."/>
            <person name="Heidelberg J.F."/>
            <person name="Hickey E.K."/>
            <person name="Peterson J.D."/>
            <person name="Dodson R.J."/>
            <person name="Haft D.H."/>
            <person name="Gwinn M.L."/>
            <person name="Nelson W.C."/>
            <person name="Richardson D.L."/>
            <person name="Moffat K.S."/>
            <person name="Qin H."/>
            <person name="Jiang L."/>
            <person name="Pamphile W."/>
            <person name="Crosby M."/>
            <person name="Shen M."/>
            <person name="Vamathevan J.J."/>
            <person name="Lam P."/>
            <person name="McDonald L.A."/>
            <person name="Utterback T.R."/>
            <person name="Zalewski C."/>
            <person name="Makarova K.S."/>
            <person name="Aravind L."/>
            <person name="Daly M.J."/>
            <person name="Minton K.W."/>
            <person name="Fleischmann R.D."/>
            <person name="Ketchum K.A."/>
            <person name="Nelson K.E."/>
            <person name="Salzberg S.L."/>
            <person name="Smith H.O."/>
            <person name="Venter J.C."/>
            <person name="Fraser C.M."/>
        </authorList>
    </citation>
    <scope>NUCLEOTIDE SEQUENCE [LARGE SCALE GENOMIC DNA]</scope>
    <source>
        <strain>ATCC 13939 / DSM 20539 / JCM 16871 / CCUG 27074 / LMG 4051 / NBRC 15346 / NCIMB 9279 / VKM B-1422 / R1</strain>
    </source>
</reference>
<accession>Q9RT27</accession>